<accession>B0Z4Y1</accession>
<keyword id="KW-0150">Chloroplast</keyword>
<keyword id="KW-0934">Plastid</keyword>
<keyword id="KW-0687">Ribonucleoprotein</keyword>
<keyword id="KW-0689">Ribosomal protein</keyword>
<comment type="subcellular location">
    <subcellularLocation>
        <location>Plastid</location>
        <location>Chloroplast</location>
    </subcellularLocation>
</comment>
<comment type="similarity">
    <text evidence="1">Belongs to the bacterial ribosomal protein bL33 family.</text>
</comment>
<protein>
    <recommendedName>
        <fullName evidence="1">Large ribosomal subunit protein bL33c</fullName>
    </recommendedName>
    <alternativeName>
        <fullName evidence="2">50S ribosomal protein L33, chloroplastic</fullName>
    </alternativeName>
</protein>
<reference key="1">
    <citation type="journal article" date="2008" name="Nucleic Acids Res.">
        <title>The complete nucleotide sequences of the five genetically distinct plastid genomes of Oenothera, subsection Oenothera: I. Sequence evaluation and plastome evolution.</title>
        <authorList>
            <person name="Greiner S."/>
            <person name="Wang X."/>
            <person name="Rauwolf U."/>
            <person name="Silber M.V."/>
            <person name="Mayer K."/>
            <person name="Meurer J."/>
            <person name="Haberer G."/>
            <person name="Herrmann R.G."/>
        </authorList>
    </citation>
    <scope>NUCLEOTIDE SEQUENCE [LARGE SCALE GENOMIC DNA]</scope>
    <source>
        <strain>cv. Suaveolens Grado</strain>
    </source>
</reference>
<evidence type="ECO:0000255" key="1">
    <source>
        <dbReference type="HAMAP-Rule" id="MF_00294"/>
    </source>
</evidence>
<evidence type="ECO:0000305" key="2"/>
<organism>
    <name type="scientific">Oenothera biennis</name>
    <name type="common">German evening primrose</name>
    <name type="synonym">Onagra biennis</name>
    <dbReference type="NCBI Taxonomy" id="3942"/>
    <lineage>
        <taxon>Eukaryota</taxon>
        <taxon>Viridiplantae</taxon>
        <taxon>Streptophyta</taxon>
        <taxon>Embryophyta</taxon>
        <taxon>Tracheophyta</taxon>
        <taxon>Spermatophyta</taxon>
        <taxon>Magnoliopsida</taxon>
        <taxon>eudicotyledons</taxon>
        <taxon>Gunneridae</taxon>
        <taxon>Pentapetalae</taxon>
        <taxon>rosids</taxon>
        <taxon>malvids</taxon>
        <taxon>Myrtales</taxon>
        <taxon>Onagraceae</taxon>
        <taxon>Onagroideae</taxon>
        <taxon>Onagreae</taxon>
        <taxon>Oenothera</taxon>
    </lineage>
</organism>
<gene>
    <name evidence="1" type="primary">rpl33</name>
</gene>
<sequence length="66" mass="7501">MARGKDARVTVILECTNCVRGGVTKESTGISRYITEKNRHNTPGQLELKKFCPYCYKQTIHGEIKK</sequence>
<feature type="chain" id="PRO_0000356817" description="Large ribosomal subunit protein bL33c">
    <location>
        <begin position="1"/>
        <end position="66"/>
    </location>
</feature>
<dbReference type="EMBL" id="EU262889">
    <property type="protein sequence ID" value="ABW98893.1"/>
    <property type="molecule type" value="Genomic_DNA"/>
</dbReference>
<dbReference type="RefSeq" id="YP_001687388.1">
    <property type="nucleotide sequence ID" value="NC_010361.1"/>
</dbReference>
<dbReference type="GeneID" id="5952038"/>
<dbReference type="GO" id="GO:0009507">
    <property type="term" value="C:chloroplast"/>
    <property type="evidence" value="ECO:0007669"/>
    <property type="project" value="UniProtKB-SubCell"/>
</dbReference>
<dbReference type="GO" id="GO:1990904">
    <property type="term" value="C:ribonucleoprotein complex"/>
    <property type="evidence" value="ECO:0007669"/>
    <property type="project" value="UniProtKB-KW"/>
</dbReference>
<dbReference type="GO" id="GO:0005840">
    <property type="term" value="C:ribosome"/>
    <property type="evidence" value="ECO:0007669"/>
    <property type="project" value="UniProtKB-KW"/>
</dbReference>
<dbReference type="GO" id="GO:0003735">
    <property type="term" value="F:structural constituent of ribosome"/>
    <property type="evidence" value="ECO:0007669"/>
    <property type="project" value="InterPro"/>
</dbReference>
<dbReference type="GO" id="GO:0006412">
    <property type="term" value="P:translation"/>
    <property type="evidence" value="ECO:0007669"/>
    <property type="project" value="UniProtKB-UniRule"/>
</dbReference>
<dbReference type="Gene3D" id="2.20.28.120">
    <property type="entry name" value="Ribosomal protein L33"/>
    <property type="match status" value="1"/>
</dbReference>
<dbReference type="HAMAP" id="MF_00294">
    <property type="entry name" value="Ribosomal_bL33"/>
    <property type="match status" value="1"/>
</dbReference>
<dbReference type="InterPro" id="IPR001705">
    <property type="entry name" value="Ribosomal_bL33"/>
</dbReference>
<dbReference type="InterPro" id="IPR018264">
    <property type="entry name" value="Ribosomal_bL33_CS"/>
</dbReference>
<dbReference type="InterPro" id="IPR038584">
    <property type="entry name" value="Ribosomal_bL33_sf"/>
</dbReference>
<dbReference type="InterPro" id="IPR011332">
    <property type="entry name" value="Ribosomal_zn-bd"/>
</dbReference>
<dbReference type="NCBIfam" id="NF001764">
    <property type="entry name" value="PRK00504.1"/>
    <property type="match status" value="1"/>
</dbReference>
<dbReference type="NCBIfam" id="NF001860">
    <property type="entry name" value="PRK00595.1"/>
    <property type="match status" value="1"/>
</dbReference>
<dbReference type="NCBIfam" id="TIGR01023">
    <property type="entry name" value="rpmG_bact"/>
    <property type="match status" value="1"/>
</dbReference>
<dbReference type="PANTHER" id="PTHR43168">
    <property type="entry name" value="50S RIBOSOMAL PROTEIN L33, CHLOROPLASTIC"/>
    <property type="match status" value="1"/>
</dbReference>
<dbReference type="PANTHER" id="PTHR43168:SF2">
    <property type="entry name" value="LARGE RIBOSOMAL SUBUNIT PROTEIN BL33C"/>
    <property type="match status" value="1"/>
</dbReference>
<dbReference type="Pfam" id="PF00471">
    <property type="entry name" value="Ribosomal_L33"/>
    <property type="match status" value="1"/>
</dbReference>
<dbReference type="SUPFAM" id="SSF57829">
    <property type="entry name" value="Zn-binding ribosomal proteins"/>
    <property type="match status" value="1"/>
</dbReference>
<dbReference type="PROSITE" id="PS00582">
    <property type="entry name" value="RIBOSOMAL_L33"/>
    <property type="match status" value="1"/>
</dbReference>
<name>RK33_OENBI</name>
<geneLocation type="chloroplast"/>
<proteinExistence type="inferred from homology"/>